<dbReference type="EMBL" id="AJ627251">
    <property type="protein sequence ID" value="CAF28615.1"/>
    <property type="molecule type" value="Genomic_DNA"/>
</dbReference>
<dbReference type="RefSeq" id="YP_053177.1">
    <property type="nucleotide sequence ID" value="NC_006050.1"/>
</dbReference>
<dbReference type="SMR" id="Q6EW31"/>
<dbReference type="GeneID" id="2896205"/>
<dbReference type="GO" id="GO:0009507">
    <property type="term" value="C:chloroplast"/>
    <property type="evidence" value="ECO:0007669"/>
    <property type="project" value="UniProtKB-SubCell"/>
</dbReference>
<dbReference type="GO" id="GO:0005763">
    <property type="term" value="C:mitochondrial small ribosomal subunit"/>
    <property type="evidence" value="ECO:0007669"/>
    <property type="project" value="TreeGrafter"/>
</dbReference>
<dbReference type="GO" id="GO:0070181">
    <property type="term" value="F:small ribosomal subunit rRNA binding"/>
    <property type="evidence" value="ECO:0007669"/>
    <property type="project" value="TreeGrafter"/>
</dbReference>
<dbReference type="GO" id="GO:0003735">
    <property type="term" value="F:structural constituent of ribosome"/>
    <property type="evidence" value="ECO:0007669"/>
    <property type="project" value="InterPro"/>
</dbReference>
<dbReference type="GO" id="GO:0006412">
    <property type="term" value="P:translation"/>
    <property type="evidence" value="ECO:0007669"/>
    <property type="project" value="UniProtKB-UniRule"/>
</dbReference>
<dbReference type="FunFam" id="4.10.640.10:FF:000002">
    <property type="entry name" value="30S ribosomal protein S18, chloroplastic"/>
    <property type="match status" value="1"/>
</dbReference>
<dbReference type="Gene3D" id="4.10.640.10">
    <property type="entry name" value="Ribosomal protein S18"/>
    <property type="match status" value="1"/>
</dbReference>
<dbReference type="HAMAP" id="MF_00270">
    <property type="entry name" value="Ribosomal_bS18"/>
    <property type="match status" value="1"/>
</dbReference>
<dbReference type="InterPro" id="IPR001648">
    <property type="entry name" value="Ribosomal_bS18"/>
</dbReference>
<dbReference type="InterPro" id="IPR018275">
    <property type="entry name" value="Ribosomal_bS18_CS"/>
</dbReference>
<dbReference type="InterPro" id="IPR036870">
    <property type="entry name" value="Ribosomal_bS18_sf"/>
</dbReference>
<dbReference type="NCBIfam" id="TIGR00165">
    <property type="entry name" value="S18"/>
    <property type="match status" value="1"/>
</dbReference>
<dbReference type="PANTHER" id="PTHR13479">
    <property type="entry name" value="30S RIBOSOMAL PROTEIN S18"/>
    <property type="match status" value="1"/>
</dbReference>
<dbReference type="PANTHER" id="PTHR13479:SF40">
    <property type="entry name" value="SMALL RIBOSOMAL SUBUNIT PROTEIN BS18M"/>
    <property type="match status" value="1"/>
</dbReference>
<dbReference type="Pfam" id="PF01084">
    <property type="entry name" value="Ribosomal_S18"/>
    <property type="match status" value="1"/>
</dbReference>
<dbReference type="PRINTS" id="PR00974">
    <property type="entry name" value="RIBOSOMALS18"/>
</dbReference>
<dbReference type="SUPFAM" id="SSF46911">
    <property type="entry name" value="Ribosomal protein S18"/>
    <property type="match status" value="1"/>
</dbReference>
<dbReference type="PROSITE" id="PS00057">
    <property type="entry name" value="RIBOSOMAL_S18"/>
    <property type="match status" value="1"/>
</dbReference>
<keyword id="KW-0150">Chloroplast</keyword>
<keyword id="KW-0934">Plastid</keyword>
<keyword id="KW-0687">Ribonucleoprotein</keyword>
<keyword id="KW-0689">Ribosomal protein</keyword>
<keyword id="KW-0694">RNA-binding</keyword>
<keyword id="KW-0699">rRNA-binding</keyword>
<comment type="subunit">
    <text>Part of the 30S ribosomal subunit.</text>
</comment>
<comment type="subcellular location">
    <subcellularLocation>
        <location>Plastid</location>
        <location>Chloroplast</location>
    </subcellularLocation>
</comment>
<comment type="similarity">
    <text evidence="1">Belongs to the bacterial ribosomal protein bS18 family.</text>
</comment>
<feature type="chain" id="PRO_0000111296" description="Small ribosomal subunit protein bS18c">
    <location>
        <begin position="1"/>
        <end position="101"/>
    </location>
</feature>
<protein>
    <recommendedName>
        <fullName evidence="1">Small ribosomal subunit protein bS18c</fullName>
    </recommendedName>
    <alternativeName>
        <fullName evidence="2">30S ribosomal protein S18, chloroplastic</fullName>
    </alternativeName>
</protein>
<gene>
    <name evidence="1" type="primary">rps18</name>
</gene>
<accession>Q6EW31</accession>
<reference key="1">
    <citation type="journal article" date="2004" name="Mol. Biol. Evol.">
        <title>The chloroplast genome of Nymphaea alba: whole-genome analyses and the problem of identifying the most basal angiosperm.</title>
        <authorList>
            <person name="Goremykin V.V."/>
            <person name="Hirsch-Ernst K.I."/>
            <person name="Woelfl S."/>
            <person name="Hellwig F.H."/>
        </authorList>
    </citation>
    <scope>NUCLEOTIDE SEQUENCE [LARGE SCALE GENOMIC DNA]</scope>
</reference>
<organism>
    <name type="scientific">Nymphaea alba</name>
    <name type="common">White water-lily</name>
    <name type="synonym">Castalia alba</name>
    <dbReference type="NCBI Taxonomy" id="34301"/>
    <lineage>
        <taxon>Eukaryota</taxon>
        <taxon>Viridiplantae</taxon>
        <taxon>Streptophyta</taxon>
        <taxon>Embryophyta</taxon>
        <taxon>Tracheophyta</taxon>
        <taxon>Spermatophyta</taxon>
        <taxon>Magnoliopsida</taxon>
        <taxon>Nymphaeales</taxon>
        <taxon>Nymphaeaceae</taxon>
        <taxon>Nymphaea</taxon>
    </lineage>
</organism>
<proteinExistence type="inferred from homology"/>
<evidence type="ECO:0000255" key="1">
    <source>
        <dbReference type="HAMAP-Rule" id="MF_00270"/>
    </source>
</evidence>
<evidence type="ECO:0000305" key="2"/>
<name>RR18_NYMAL</name>
<sequence length="101" mass="12098">MEKFKRPFRKSKRSFRRRLPPIGLGDRIDYRNMSLISRFISEQGKILPRRVNRLTLKQQRLITIAIKQARILSLLPFLNNEKQFERAESISRTTGTRTRKK</sequence>
<geneLocation type="chloroplast"/>